<keyword id="KW-0067">ATP-binding</keyword>
<keyword id="KW-0997">Cell inner membrane</keyword>
<keyword id="KW-1003">Cell membrane</keyword>
<keyword id="KW-0472">Membrane</keyword>
<keyword id="KW-0547">Nucleotide-binding</keyword>
<keyword id="KW-1185">Reference proteome</keyword>
<keyword id="KW-0677">Repeat</keyword>
<keyword id="KW-0762">Sugar transport</keyword>
<keyword id="KW-1278">Translocase</keyword>
<keyword id="KW-0813">Transport</keyword>
<reference key="1">
    <citation type="journal article" date="2001" name="Nature">
        <title>Complete genome sequence of Salmonella enterica serovar Typhimurium LT2.</title>
        <authorList>
            <person name="McClelland M."/>
            <person name="Sanderson K.E."/>
            <person name="Spieth J."/>
            <person name="Clifton S.W."/>
            <person name="Latreille P."/>
            <person name="Courtney L."/>
            <person name="Porwollik S."/>
            <person name="Ali J."/>
            <person name="Dante M."/>
            <person name="Du F."/>
            <person name="Hou S."/>
            <person name="Layman D."/>
            <person name="Leonard S."/>
            <person name="Nguyen C."/>
            <person name="Scott K."/>
            <person name="Holmes A."/>
            <person name="Grewal N."/>
            <person name="Mulvaney E."/>
            <person name="Ryan E."/>
            <person name="Sun H."/>
            <person name="Florea L."/>
            <person name="Miller W."/>
            <person name="Stoneking T."/>
            <person name="Nhan M."/>
            <person name="Waterston R."/>
            <person name="Wilson R.K."/>
        </authorList>
    </citation>
    <scope>NUCLEOTIDE SEQUENCE [LARGE SCALE GENOMIC DNA]</scope>
    <source>
        <strain>LT2 / SGSC1412 / ATCC 700720</strain>
    </source>
</reference>
<protein>
    <recommendedName>
        <fullName evidence="1">Ribose import ATP-binding protein RbsA</fullName>
        <ecNumber evidence="1">7.5.2.7</ecNumber>
    </recommendedName>
</protein>
<proteinExistence type="inferred from homology"/>
<dbReference type="EC" id="7.5.2.7" evidence="1"/>
<dbReference type="EMBL" id="AE006468">
    <property type="protein sequence ID" value="AAL22740.1"/>
    <property type="molecule type" value="Genomic_DNA"/>
</dbReference>
<dbReference type="RefSeq" id="NP_462781.1">
    <property type="nucleotide sequence ID" value="NC_003197.2"/>
</dbReference>
<dbReference type="RefSeq" id="WP_000339359.1">
    <property type="nucleotide sequence ID" value="NC_003197.2"/>
</dbReference>
<dbReference type="SMR" id="Q8ZKV9"/>
<dbReference type="STRING" id="99287.STM3882"/>
<dbReference type="PaxDb" id="99287-STM3882"/>
<dbReference type="GeneID" id="1255409"/>
<dbReference type="KEGG" id="stm:STM3882"/>
<dbReference type="PATRIC" id="fig|99287.12.peg.4112"/>
<dbReference type="HOGENOM" id="CLU_000604_92_3_6"/>
<dbReference type="OMA" id="EVKNWNA"/>
<dbReference type="PhylomeDB" id="Q8ZKV9"/>
<dbReference type="BioCyc" id="SENT99287:STM3882-MONOMER"/>
<dbReference type="Proteomes" id="UP000001014">
    <property type="component" value="Chromosome"/>
</dbReference>
<dbReference type="GO" id="GO:0005886">
    <property type="term" value="C:plasma membrane"/>
    <property type="evidence" value="ECO:0007669"/>
    <property type="project" value="UniProtKB-SubCell"/>
</dbReference>
<dbReference type="GO" id="GO:0015611">
    <property type="term" value="F:ABC-type D-ribose transporter activity"/>
    <property type="evidence" value="ECO:0007669"/>
    <property type="project" value="UniProtKB-EC"/>
</dbReference>
<dbReference type="GO" id="GO:0005524">
    <property type="term" value="F:ATP binding"/>
    <property type="evidence" value="ECO:0007669"/>
    <property type="project" value="UniProtKB-KW"/>
</dbReference>
<dbReference type="GO" id="GO:0016887">
    <property type="term" value="F:ATP hydrolysis activity"/>
    <property type="evidence" value="ECO:0007669"/>
    <property type="project" value="InterPro"/>
</dbReference>
<dbReference type="CDD" id="cd03216">
    <property type="entry name" value="ABC_Carb_Monos_I"/>
    <property type="match status" value="1"/>
</dbReference>
<dbReference type="CDD" id="cd03215">
    <property type="entry name" value="ABC_Carb_Monos_II"/>
    <property type="match status" value="1"/>
</dbReference>
<dbReference type="FunFam" id="3.40.50.300:FF:000126">
    <property type="entry name" value="Galactose/methyl galactoside import ATP-binding protein MglA"/>
    <property type="match status" value="1"/>
</dbReference>
<dbReference type="FunFam" id="3.40.50.300:FF:000127">
    <property type="entry name" value="Ribose import ATP-binding protein RbsA"/>
    <property type="match status" value="1"/>
</dbReference>
<dbReference type="Gene3D" id="3.40.50.300">
    <property type="entry name" value="P-loop containing nucleotide triphosphate hydrolases"/>
    <property type="match status" value="2"/>
</dbReference>
<dbReference type="InterPro" id="IPR003593">
    <property type="entry name" value="AAA+_ATPase"/>
</dbReference>
<dbReference type="InterPro" id="IPR050107">
    <property type="entry name" value="ABC_carbohydrate_import_ATPase"/>
</dbReference>
<dbReference type="InterPro" id="IPR003439">
    <property type="entry name" value="ABC_transporter-like_ATP-bd"/>
</dbReference>
<dbReference type="InterPro" id="IPR017871">
    <property type="entry name" value="ABC_transporter-like_CS"/>
</dbReference>
<dbReference type="InterPro" id="IPR027417">
    <property type="entry name" value="P-loop_NTPase"/>
</dbReference>
<dbReference type="NCBIfam" id="NF008030">
    <property type="entry name" value="PRK10762.1"/>
    <property type="match status" value="1"/>
</dbReference>
<dbReference type="PANTHER" id="PTHR43790">
    <property type="entry name" value="CARBOHYDRATE TRANSPORT ATP-BINDING PROTEIN MG119-RELATED"/>
    <property type="match status" value="1"/>
</dbReference>
<dbReference type="PANTHER" id="PTHR43790:SF3">
    <property type="entry name" value="D-ALLOSE IMPORT ATP-BINDING PROTEIN ALSA-RELATED"/>
    <property type="match status" value="1"/>
</dbReference>
<dbReference type="Pfam" id="PF00005">
    <property type="entry name" value="ABC_tran"/>
    <property type="match status" value="2"/>
</dbReference>
<dbReference type="SMART" id="SM00382">
    <property type="entry name" value="AAA"/>
    <property type="match status" value="2"/>
</dbReference>
<dbReference type="SUPFAM" id="SSF52540">
    <property type="entry name" value="P-loop containing nucleoside triphosphate hydrolases"/>
    <property type="match status" value="2"/>
</dbReference>
<dbReference type="PROSITE" id="PS00211">
    <property type="entry name" value="ABC_TRANSPORTER_1"/>
    <property type="match status" value="1"/>
</dbReference>
<dbReference type="PROSITE" id="PS50893">
    <property type="entry name" value="ABC_TRANSPORTER_2"/>
    <property type="match status" value="1"/>
</dbReference>
<dbReference type="PROSITE" id="PS51254">
    <property type="entry name" value="RBSA"/>
    <property type="match status" value="1"/>
</dbReference>
<evidence type="ECO:0000255" key="1">
    <source>
        <dbReference type="HAMAP-Rule" id="MF_01716"/>
    </source>
</evidence>
<name>RBSA_SALTY</name>
<gene>
    <name evidence="1" type="primary">rbsA</name>
    <name type="ordered locus">STM3882</name>
</gene>
<sequence>MDALLQLKGIDKAFPGVKALSGAALNVYPGRVMALVGENGAGKSTMMKVLTGIYTRDAGSLLWLGKETTFNGPKSSQEAGIGIIHQELNLIPQLTIAENIFLGREFVNRFGKIDWKKMYAEADHLLAKLNLRFKSDKLVGELSIGDQQMVEIAKVLSFESKVIIMDEPTDALTDTETDSLFRVIRELKSQGRGIVYISHRMKEIFEICDDVTVFRDGQFIAEREVATLTEDSLIEMMVGRKLEDQYPHLDNAPGEIRLKVDNLCGPGVNDVSFVLRKGEILGISGLMGAGRTELMKVLYGAMPRTSGYVTLDGHEVVTRSPQDGLANGIVYISEDRKRDGLVLGMSVKENMSLTALDYFSRAGGSLKHKDEQQAVGDFIRLFNVKTPSMEQAIGLLSGGNQQKVAIARGLMTRPKVLILDEPTRGVDVGAKKEIYQLINQFKADGLSIILVSSEMPEVLGMSDRIIVMHEGHLSGEFTREQATQEVLMAAAVGKLNRVNQE</sequence>
<accession>Q8ZKV9</accession>
<feature type="chain" id="PRO_0000261101" description="Ribose import ATP-binding protein RbsA">
    <location>
        <begin position="1"/>
        <end position="501"/>
    </location>
</feature>
<feature type="domain" description="ABC transporter 1" evidence="1">
    <location>
        <begin position="5"/>
        <end position="241"/>
    </location>
</feature>
<feature type="domain" description="ABC transporter 2" evidence="1">
    <location>
        <begin position="252"/>
        <end position="495"/>
    </location>
</feature>
<feature type="binding site" evidence="1">
    <location>
        <begin position="37"/>
        <end position="44"/>
    </location>
    <ligand>
        <name>ATP</name>
        <dbReference type="ChEBI" id="CHEBI:30616"/>
    </ligand>
</feature>
<organism>
    <name type="scientific">Salmonella typhimurium (strain LT2 / SGSC1412 / ATCC 700720)</name>
    <dbReference type="NCBI Taxonomy" id="99287"/>
    <lineage>
        <taxon>Bacteria</taxon>
        <taxon>Pseudomonadati</taxon>
        <taxon>Pseudomonadota</taxon>
        <taxon>Gammaproteobacteria</taxon>
        <taxon>Enterobacterales</taxon>
        <taxon>Enterobacteriaceae</taxon>
        <taxon>Salmonella</taxon>
    </lineage>
</organism>
<comment type="function">
    <text evidence="1">Part of the ABC transporter complex RbsABC involved in ribose import. Responsible for energy coupling to the transport system.</text>
</comment>
<comment type="catalytic activity">
    <reaction evidence="1">
        <text>D-ribose(out) + ATP + H2O = D-ribose(in) + ADP + phosphate + H(+)</text>
        <dbReference type="Rhea" id="RHEA:29903"/>
        <dbReference type="ChEBI" id="CHEBI:15377"/>
        <dbReference type="ChEBI" id="CHEBI:15378"/>
        <dbReference type="ChEBI" id="CHEBI:30616"/>
        <dbReference type="ChEBI" id="CHEBI:43474"/>
        <dbReference type="ChEBI" id="CHEBI:47013"/>
        <dbReference type="ChEBI" id="CHEBI:456216"/>
        <dbReference type="EC" id="7.5.2.7"/>
    </reaction>
</comment>
<comment type="subunit">
    <text evidence="1">The complex is composed of an ATP-binding protein (RbsA), two transmembrane proteins (RbsC) and a solute-binding protein (RbsB).</text>
</comment>
<comment type="subcellular location">
    <subcellularLocation>
        <location evidence="1">Cell inner membrane</location>
        <topology evidence="1">Peripheral membrane protein</topology>
    </subcellularLocation>
</comment>
<comment type="similarity">
    <text evidence="1">Belongs to the ABC transporter superfamily. Ribose importer (TC 3.A.1.2.1) family.</text>
</comment>